<comment type="function">
    <text evidence="1">Cell wall formation.</text>
</comment>
<comment type="catalytic activity">
    <reaction evidence="1">
        <text>UDP-N-acetyl-alpha-D-muramate + L-alanine + ATP = UDP-N-acetyl-alpha-D-muramoyl-L-alanine + ADP + phosphate + H(+)</text>
        <dbReference type="Rhea" id="RHEA:23372"/>
        <dbReference type="ChEBI" id="CHEBI:15378"/>
        <dbReference type="ChEBI" id="CHEBI:30616"/>
        <dbReference type="ChEBI" id="CHEBI:43474"/>
        <dbReference type="ChEBI" id="CHEBI:57972"/>
        <dbReference type="ChEBI" id="CHEBI:70757"/>
        <dbReference type="ChEBI" id="CHEBI:83898"/>
        <dbReference type="ChEBI" id="CHEBI:456216"/>
        <dbReference type="EC" id="6.3.2.8"/>
    </reaction>
</comment>
<comment type="pathway">
    <text evidence="1">Cell wall biogenesis; peptidoglycan biosynthesis.</text>
</comment>
<comment type="subcellular location">
    <subcellularLocation>
        <location evidence="1">Cytoplasm</location>
    </subcellularLocation>
</comment>
<comment type="similarity">
    <text evidence="1">Belongs to the MurCDEF family.</text>
</comment>
<sequence length="465" mass="47972">MSVELNDLGRVHFIGIGGAGMSGIVRIMLARGISVSGSDAKESAGLLELGALGASVHAGHAAQNVAGADTVVISTAIRANNPELEFARTQGLRVLHRSEALAAAMAQDTVVAVAGTHGKTTTTAMIAVLLREAGLDPSFAVGGTVPALGVNAAHGAGGIFVAEADESDGSFLNYRPQIAVVTNAEPDHLDHYGTAEAVMEAFQSFIGLIPADGLLVACTDDDGALALAKQAAARGTRVVTYGRSAAAEVWLINDGAHRAIEFITPIGPQRLVLELQVPGEHNALNALAAFAVALELGVEAEQALSALAGFTGAARRFEFKGQVRGIRVFDDYAHHPTEVRAALTAARTVADGHHVLVLFQPHLFSRTHEFAAEFAAALSLADSIMVLDVYPAREDPIPGVTGELITEANAKLTFQPDRAKAIQELVARTANGDIVLTVGAGDVTEAGAAILDALATPAQEVSHGG</sequence>
<evidence type="ECO:0000255" key="1">
    <source>
        <dbReference type="HAMAP-Rule" id="MF_00046"/>
    </source>
</evidence>
<gene>
    <name evidence="1" type="primary">murC</name>
    <name type="ordered locus">RSal33209_2493</name>
</gene>
<reference key="1">
    <citation type="journal article" date="2008" name="J. Bacteriol.">
        <title>Genome sequence of the fish pathogen Renibacterium salmoninarum suggests reductive evolution away from an environmental Arthrobacter ancestor.</title>
        <authorList>
            <person name="Wiens G.D."/>
            <person name="Rockey D.D."/>
            <person name="Wu Z."/>
            <person name="Chang J."/>
            <person name="Levy R."/>
            <person name="Crane S."/>
            <person name="Chen D.S."/>
            <person name="Capri G.R."/>
            <person name="Burnett J.R."/>
            <person name="Sudheesh P.S."/>
            <person name="Schipma M.J."/>
            <person name="Burd H."/>
            <person name="Bhattacharyya A."/>
            <person name="Rhodes L.D."/>
            <person name="Kaul R."/>
            <person name="Strom M.S."/>
        </authorList>
    </citation>
    <scope>NUCLEOTIDE SEQUENCE [LARGE SCALE GENOMIC DNA]</scope>
    <source>
        <strain>ATCC 33209 / DSM 20767 / JCM 11484 / NBRC 15589 / NCIMB 2235</strain>
    </source>
</reference>
<keyword id="KW-0067">ATP-binding</keyword>
<keyword id="KW-0131">Cell cycle</keyword>
<keyword id="KW-0132">Cell division</keyword>
<keyword id="KW-0133">Cell shape</keyword>
<keyword id="KW-0961">Cell wall biogenesis/degradation</keyword>
<keyword id="KW-0963">Cytoplasm</keyword>
<keyword id="KW-0436">Ligase</keyword>
<keyword id="KW-0547">Nucleotide-binding</keyword>
<keyword id="KW-0573">Peptidoglycan synthesis</keyword>
<keyword id="KW-1185">Reference proteome</keyword>
<proteinExistence type="inferred from homology"/>
<feature type="chain" id="PRO_0000336860" description="UDP-N-acetylmuramate--L-alanine ligase">
    <location>
        <begin position="1"/>
        <end position="465"/>
    </location>
</feature>
<feature type="binding site" evidence="1">
    <location>
        <begin position="115"/>
        <end position="121"/>
    </location>
    <ligand>
        <name>ATP</name>
        <dbReference type="ChEBI" id="CHEBI:30616"/>
    </ligand>
</feature>
<accession>A9WRD7</accession>
<protein>
    <recommendedName>
        <fullName evidence="1">UDP-N-acetylmuramate--L-alanine ligase</fullName>
        <ecNumber evidence="1">6.3.2.8</ecNumber>
    </recommendedName>
    <alternativeName>
        <fullName evidence="1">UDP-N-acetylmuramoyl-L-alanine synthetase</fullName>
    </alternativeName>
</protein>
<dbReference type="EC" id="6.3.2.8" evidence="1"/>
<dbReference type="EMBL" id="CP000910">
    <property type="protein sequence ID" value="ABY24219.1"/>
    <property type="molecule type" value="Genomic_DNA"/>
</dbReference>
<dbReference type="RefSeq" id="WP_012245879.1">
    <property type="nucleotide sequence ID" value="NC_010168.1"/>
</dbReference>
<dbReference type="SMR" id="A9WRD7"/>
<dbReference type="STRING" id="288705.RSal33209_2493"/>
<dbReference type="KEGG" id="rsa:RSal33209_2493"/>
<dbReference type="eggNOG" id="COG0773">
    <property type="taxonomic scope" value="Bacteria"/>
</dbReference>
<dbReference type="HOGENOM" id="CLU_028104_2_2_11"/>
<dbReference type="UniPathway" id="UPA00219"/>
<dbReference type="Proteomes" id="UP000002007">
    <property type="component" value="Chromosome"/>
</dbReference>
<dbReference type="GO" id="GO:0005737">
    <property type="term" value="C:cytoplasm"/>
    <property type="evidence" value="ECO:0007669"/>
    <property type="project" value="UniProtKB-SubCell"/>
</dbReference>
<dbReference type="GO" id="GO:0005524">
    <property type="term" value="F:ATP binding"/>
    <property type="evidence" value="ECO:0007669"/>
    <property type="project" value="UniProtKB-UniRule"/>
</dbReference>
<dbReference type="GO" id="GO:0008763">
    <property type="term" value="F:UDP-N-acetylmuramate-L-alanine ligase activity"/>
    <property type="evidence" value="ECO:0007669"/>
    <property type="project" value="UniProtKB-UniRule"/>
</dbReference>
<dbReference type="GO" id="GO:0051301">
    <property type="term" value="P:cell division"/>
    <property type="evidence" value="ECO:0007669"/>
    <property type="project" value="UniProtKB-KW"/>
</dbReference>
<dbReference type="GO" id="GO:0071555">
    <property type="term" value="P:cell wall organization"/>
    <property type="evidence" value="ECO:0007669"/>
    <property type="project" value="UniProtKB-KW"/>
</dbReference>
<dbReference type="GO" id="GO:0009252">
    <property type="term" value="P:peptidoglycan biosynthetic process"/>
    <property type="evidence" value="ECO:0007669"/>
    <property type="project" value="UniProtKB-UniRule"/>
</dbReference>
<dbReference type="GO" id="GO:0008360">
    <property type="term" value="P:regulation of cell shape"/>
    <property type="evidence" value="ECO:0007669"/>
    <property type="project" value="UniProtKB-KW"/>
</dbReference>
<dbReference type="Gene3D" id="3.90.190.20">
    <property type="entry name" value="Mur ligase, C-terminal domain"/>
    <property type="match status" value="1"/>
</dbReference>
<dbReference type="Gene3D" id="3.40.1190.10">
    <property type="entry name" value="Mur-like, catalytic domain"/>
    <property type="match status" value="1"/>
</dbReference>
<dbReference type="Gene3D" id="3.40.50.720">
    <property type="entry name" value="NAD(P)-binding Rossmann-like Domain"/>
    <property type="match status" value="1"/>
</dbReference>
<dbReference type="HAMAP" id="MF_00046">
    <property type="entry name" value="MurC"/>
    <property type="match status" value="1"/>
</dbReference>
<dbReference type="InterPro" id="IPR036565">
    <property type="entry name" value="Mur-like_cat_sf"/>
</dbReference>
<dbReference type="InterPro" id="IPR004101">
    <property type="entry name" value="Mur_ligase_C"/>
</dbReference>
<dbReference type="InterPro" id="IPR036615">
    <property type="entry name" value="Mur_ligase_C_dom_sf"/>
</dbReference>
<dbReference type="InterPro" id="IPR013221">
    <property type="entry name" value="Mur_ligase_cen"/>
</dbReference>
<dbReference type="InterPro" id="IPR000713">
    <property type="entry name" value="Mur_ligase_N"/>
</dbReference>
<dbReference type="InterPro" id="IPR050061">
    <property type="entry name" value="MurCDEF_pg_biosynth"/>
</dbReference>
<dbReference type="InterPro" id="IPR005758">
    <property type="entry name" value="UDP-N-AcMur_Ala_ligase_MurC"/>
</dbReference>
<dbReference type="NCBIfam" id="TIGR01082">
    <property type="entry name" value="murC"/>
    <property type="match status" value="1"/>
</dbReference>
<dbReference type="PANTHER" id="PTHR43445:SF3">
    <property type="entry name" value="UDP-N-ACETYLMURAMATE--L-ALANINE LIGASE"/>
    <property type="match status" value="1"/>
</dbReference>
<dbReference type="PANTHER" id="PTHR43445">
    <property type="entry name" value="UDP-N-ACETYLMURAMATE--L-ALANINE LIGASE-RELATED"/>
    <property type="match status" value="1"/>
</dbReference>
<dbReference type="Pfam" id="PF01225">
    <property type="entry name" value="Mur_ligase"/>
    <property type="match status" value="1"/>
</dbReference>
<dbReference type="Pfam" id="PF02875">
    <property type="entry name" value="Mur_ligase_C"/>
    <property type="match status" value="1"/>
</dbReference>
<dbReference type="Pfam" id="PF08245">
    <property type="entry name" value="Mur_ligase_M"/>
    <property type="match status" value="1"/>
</dbReference>
<dbReference type="SUPFAM" id="SSF51984">
    <property type="entry name" value="MurCD N-terminal domain"/>
    <property type="match status" value="1"/>
</dbReference>
<dbReference type="SUPFAM" id="SSF53623">
    <property type="entry name" value="MurD-like peptide ligases, catalytic domain"/>
    <property type="match status" value="1"/>
</dbReference>
<dbReference type="SUPFAM" id="SSF53244">
    <property type="entry name" value="MurD-like peptide ligases, peptide-binding domain"/>
    <property type="match status" value="1"/>
</dbReference>
<name>MURC_RENSM</name>
<organism>
    <name type="scientific">Renibacterium salmoninarum (strain ATCC 33209 / DSM 20767 / JCM 11484 / NBRC 15589 / NCIMB 2235)</name>
    <dbReference type="NCBI Taxonomy" id="288705"/>
    <lineage>
        <taxon>Bacteria</taxon>
        <taxon>Bacillati</taxon>
        <taxon>Actinomycetota</taxon>
        <taxon>Actinomycetes</taxon>
        <taxon>Micrococcales</taxon>
        <taxon>Micrococcaceae</taxon>
        <taxon>Renibacterium</taxon>
    </lineage>
</organism>